<reference key="1">
    <citation type="journal article" date="1999" name="Genetics">
        <title>Multiple chromosomes in bacteria. The yin and yang of trp gene localization in Rhodobacter sphaeroides 2.4.1.</title>
        <authorList>
            <person name="Mackenzie C."/>
            <person name="Simmons A.E."/>
            <person name="Kaplan S."/>
        </authorList>
    </citation>
    <scope>NUCLEOTIDE SEQUENCE [GENOMIC DNA]</scope>
</reference>
<reference key="2">
    <citation type="submission" date="2005-09" db="EMBL/GenBank/DDBJ databases">
        <title>Complete sequence of chromosome 1 of Rhodobacter sphaeroides 2.4.1.</title>
        <authorList>
            <person name="Copeland A."/>
            <person name="Lucas S."/>
            <person name="Lapidus A."/>
            <person name="Barry K."/>
            <person name="Detter J.C."/>
            <person name="Glavina T."/>
            <person name="Hammon N."/>
            <person name="Israni S."/>
            <person name="Pitluck S."/>
            <person name="Richardson P."/>
            <person name="Mackenzie C."/>
            <person name="Choudhary M."/>
            <person name="Larimer F."/>
            <person name="Hauser L.J."/>
            <person name="Land M."/>
            <person name="Donohue T.J."/>
            <person name="Kaplan S."/>
        </authorList>
    </citation>
    <scope>NUCLEOTIDE SEQUENCE [LARGE SCALE GENOMIC DNA]</scope>
    <source>
        <strain>ATCC 17023 / DSM 158 / JCM 6121 / CCUG 31486 / LMG 2827 / NBRC 12203 / NCIMB 8253 / ATH 2.4.1.</strain>
    </source>
</reference>
<dbReference type="EC" id="4.1.1.48"/>
<dbReference type="EMBL" id="AF108766">
    <property type="protein sequence ID" value="AAD09119.1"/>
    <property type="molecule type" value="Genomic_DNA"/>
</dbReference>
<dbReference type="EMBL" id="CP000143">
    <property type="protein sequence ID" value="ABA78150.1"/>
    <property type="molecule type" value="Genomic_DNA"/>
</dbReference>
<dbReference type="PIR" id="T46856">
    <property type="entry name" value="T46856"/>
</dbReference>
<dbReference type="RefSeq" id="WP_011337146.1">
    <property type="nucleotide sequence ID" value="NC_007493.2"/>
</dbReference>
<dbReference type="RefSeq" id="YP_352051.1">
    <property type="nucleotide sequence ID" value="NC_007493.2"/>
</dbReference>
<dbReference type="SMR" id="Q9ZFA7"/>
<dbReference type="STRING" id="272943.RSP_6214"/>
<dbReference type="EnsemblBacteria" id="ABA78150">
    <property type="protein sequence ID" value="ABA78150"/>
    <property type="gene ID" value="RSP_6214"/>
</dbReference>
<dbReference type="GeneID" id="3719333"/>
<dbReference type="KEGG" id="rsp:RSP_6214"/>
<dbReference type="PATRIC" id="fig|272943.9.peg.889"/>
<dbReference type="eggNOG" id="COG0134">
    <property type="taxonomic scope" value="Bacteria"/>
</dbReference>
<dbReference type="OrthoDB" id="9804217at2"/>
<dbReference type="PhylomeDB" id="Q9ZFA7"/>
<dbReference type="UniPathway" id="UPA00035">
    <property type="reaction ID" value="UER00043"/>
</dbReference>
<dbReference type="Proteomes" id="UP000002703">
    <property type="component" value="Chromosome 1"/>
</dbReference>
<dbReference type="GO" id="GO:0004425">
    <property type="term" value="F:indole-3-glycerol-phosphate synthase activity"/>
    <property type="evidence" value="ECO:0007669"/>
    <property type="project" value="UniProtKB-UniRule"/>
</dbReference>
<dbReference type="GO" id="GO:0004640">
    <property type="term" value="F:phosphoribosylanthranilate isomerase activity"/>
    <property type="evidence" value="ECO:0007669"/>
    <property type="project" value="TreeGrafter"/>
</dbReference>
<dbReference type="GO" id="GO:0000162">
    <property type="term" value="P:L-tryptophan biosynthetic process"/>
    <property type="evidence" value="ECO:0007669"/>
    <property type="project" value="UniProtKB-UniRule"/>
</dbReference>
<dbReference type="CDD" id="cd00331">
    <property type="entry name" value="IGPS"/>
    <property type="match status" value="1"/>
</dbReference>
<dbReference type="FunFam" id="3.20.20.70:FF:000024">
    <property type="entry name" value="Indole-3-glycerol phosphate synthase"/>
    <property type="match status" value="1"/>
</dbReference>
<dbReference type="Gene3D" id="3.20.20.70">
    <property type="entry name" value="Aldolase class I"/>
    <property type="match status" value="1"/>
</dbReference>
<dbReference type="HAMAP" id="MF_00134_B">
    <property type="entry name" value="IGPS_B"/>
    <property type="match status" value="1"/>
</dbReference>
<dbReference type="InterPro" id="IPR013785">
    <property type="entry name" value="Aldolase_TIM"/>
</dbReference>
<dbReference type="InterPro" id="IPR045186">
    <property type="entry name" value="Indole-3-glycerol_P_synth"/>
</dbReference>
<dbReference type="InterPro" id="IPR013798">
    <property type="entry name" value="Indole-3-glycerol_P_synth_dom"/>
</dbReference>
<dbReference type="InterPro" id="IPR001468">
    <property type="entry name" value="Indole-3-GlycerolPSynthase_CS"/>
</dbReference>
<dbReference type="InterPro" id="IPR011060">
    <property type="entry name" value="RibuloseP-bd_barrel"/>
</dbReference>
<dbReference type="NCBIfam" id="NF001370">
    <property type="entry name" value="PRK00278.1-2"/>
    <property type="match status" value="1"/>
</dbReference>
<dbReference type="NCBIfam" id="NF001373">
    <property type="entry name" value="PRK00278.1-6"/>
    <property type="match status" value="1"/>
</dbReference>
<dbReference type="NCBIfam" id="NF001377">
    <property type="entry name" value="PRK00278.2-4"/>
    <property type="match status" value="1"/>
</dbReference>
<dbReference type="PANTHER" id="PTHR22854:SF2">
    <property type="entry name" value="INDOLE-3-GLYCEROL-PHOSPHATE SYNTHASE"/>
    <property type="match status" value="1"/>
</dbReference>
<dbReference type="PANTHER" id="PTHR22854">
    <property type="entry name" value="TRYPTOPHAN BIOSYNTHESIS PROTEIN"/>
    <property type="match status" value="1"/>
</dbReference>
<dbReference type="Pfam" id="PF00218">
    <property type="entry name" value="IGPS"/>
    <property type="match status" value="1"/>
</dbReference>
<dbReference type="SUPFAM" id="SSF51366">
    <property type="entry name" value="Ribulose-phoshate binding barrel"/>
    <property type="match status" value="1"/>
</dbReference>
<dbReference type="PROSITE" id="PS00614">
    <property type="entry name" value="IGPS"/>
    <property type="match status" value="1"/>
</dbReference>
<comment type="catalytic activity">
    <reaction>
        <text>1-(2-carboxyphenylamino)-1-deoxy-D-ribulose 5-phosphate + H(+) = (1S,2R)-1-C-(indol-3-yl)glycerol 3-phosphate + CO2 + H2O</text>
        <dbReference type="Rhea" id="RHEA:23476"/>
        <dbReference type="ChEBI" id="CHEBI:15377"/>
        <dbReference type="ChEBI" id="CHEBI:15378"/>
        <dbReference type="ChEBI" id="CHEBI:16526"/>
        <dbReference type="ChEBI" id="CHEBI:58613"/>
        <dbReference type="ChEBI" id="CHEBI:58866"/>
        <dbReference type="EC" id="4.1.1.48"/>
    </reaction>
</comment>
<comment type="pathway">
    <text>Amino-acid biosynthesis; L-tryptophan biosynthesis; L-tryptophan from chorismate: step 4/5.</text>
</comment>
<comment type="similarity">
    <text evidence="1">Belongs to the TrpC family.</text>
</comment>
<keyword id="KW-0028">Amino-acid biosynthesis</keyword>
<keyword id="KW-0057">Aromatic amino acid biosynthesis</keyword>
<keyword id="KW-0210">Decarboxylase</keyword>
<keyword id="KW-0456">Lyase</keyword>
<keyword id="KW-1185">Reference proteome</keyword>
<keyword id="KW-0822">Tryptophan biosynthesis</keyword>
<organism>
    <name type="scientific">Cereibacter sphaeroides (strain ATCC 17023 / DSM 158 / JCM 6121 / CCUG 31486 / LMG 2827 / NBRC 12203 / NCIMB 8253 / ATH 2.4.1.)</name>
    <name type="common">Rhodobacter sphaeroides</name>
    <dbReference type="NCBI Taxonomy" id="272943"/>
    <lineage>
        <taxon>Bacteria</taxon>
        <taxon>Pseudomonadati</taxon>
        <taxon>Pseudomonadota</taxon>
        <taxon>Alphaproteobacteria</taxon>
        <taxon>Rhodobacterales</taxon>
        <taxon>Paracoccaceae</taxon>
        <taxon>Cereibacter</taxon>
    </lineage>
</organism>
<gene>
    <name type="primary">trpC</name>
    <name type="ordered locus">RHOS4_05820</name>
    <name type="ORF">RSP_6214</name>
</gene>
<sequence>MSTILDRIKAYKLEEIAARKAERPLVAVEDAARAAPAPRGFARALSTAAATGYGLIAEIKKASPSKGLIREDFDVPALARAYETGGATCLSVLTDGPSFQGADDFLRQAREAVKLPCLRKDFLYDTYQVAEARALGADCILIIMASVTDSQALELEAAASHWGMDVLVEVHSREELARAEHLKSRLIGINNRNLDTFEVSLDVTRDLARRVPEDRLIVSESGLHTPEDLADLARYGARCFLIGESLMRQADVEAATRAILADPLTAQGGV</sequence>
<evidence type="ECO:0000305" key="1"/>
<protein>
    <recommendedName>
        <fullName>Indole-3-glycerol phosphate synthase</fullName>
        <shortName>IGPS</shortName>
        <ecNumber>4.1.1.48</ecNumber>
    </recommendedName>
</protein>
<accession>Q9ZFA7</accession>
<accession>Q3J4Y4</accession>
<proteinExistence type="inferred from homology"/>
<name>TRPC_CERS4</name>
<feature type="chain" id="PRO_0000154248" description="Indole-3-glycerol phosphate synthase">
    <location>
        <begin position="1"/>
        <end position="270"/>
    </location>
</feature>